<sequence>MQTQVLFEHPLNEKMRTWLRIEFLIQQLTVNLPIVDHAGALHFFRNVSELLDVFERGEVRTELLKELDRQQRKLQTWIGVPGVDQSRIEALIQQLKAAGSVLISAPRIGQFLREDRLIALVRQRLSIPGGCCSFDLPTLHIWLHLPQAQRDSQVETWIASLNPLTQALTMVLDLIRQSAPFRKQTSLNGFYQDNGGDADLLRLNLSLDSQLYPQISGHKSRFAIRFMPLDSENGQVPERLDFELACC</sequence>
<protein>
    <recommendedName>
        <fullName evidence="1">Cell division protein ZapD</fullName>
    </recommendedName>
    <alternativeName>
        <fullName evidence="1">Z ring-associated protein D</fullName>
    </alternativeName>
</protein>
<name>ZAPD_SHIB3</name>
<reference key="1">
    <citation type="submission" date="2008-05" db="EMBL/GenBank/DDBJ databases">
        <title>Complete sequence of Shigella boydii serotype 18 strain BS512.</title>
        <authorList>
            <person name="Rasko D.A."/>
            <person name="Rosovitz M."/>
            <person name="Maurelli A.T."/>
            <person name="Myers G."/>
            <person name="Seshadri R."/>
            <person name="Cer R."/>
            <person name="Jiang L."/>
            <person name="Ravel J."/>
            <person name="Sebastian Y."/>
        </authorList>
    </citation>
    <scope>NUCLEOTIDE SEQUENCE [LARGE SCALE GENOMIC DNA]</scope>
    <source>
        <strain>CDC 3083-94 / BS512</strain>
    </source>
</reference>
<dbReference type="EMBL" id="CP001063">
    <property type="protein sequence ID" value="ACD06416.1"/>
    <property type="molecule type" value="Genomic_DNA"/>
</dbReference>
<dbReference type="RefSeq" id="WP_001194731.1">
    <property type="nucleotide sequence ID" value="NC_010658.1"/>
</dbReference>
<dbReference type="SMR" id="B2U2A7"/>
<dbReference type="STRING" id="344609.SbBS512_E0095"/>
<dbReference type="KEGG" id="sbc:SbBS512_E0095"/>
<dbReference type="HOGENOM" id="CLU_076303_0_0_6"/>
<dbReference type="Proteomes" id="UP000001030">
    <property type="component" value="Chromosome"/>
</dbReference>
<dbReference type="GO" id="GO:0032153">
    <property type="term" value="C:cell division site"/>
    <property type="evidence" value="ECO:0007669"/>
    <property type="project" value="TreeGrafter"/>
</dbReference>
<dbReference type="GO" id="GO:0005737">
    <property type="term" value="C:cytoplasm"/>
    <property type="evidence" value="ECO:0007669"/>
    <property type="project" value="UniProtKB-SubCell"/>
</dbReference>
<dbReference type="GO" id="GO:0000917">
    <property type="term" value="P:division septum assembly"/>
    <property type="evidence" value="ECO:0007669"/>
    <property type="project" value="UniProtKB-KW"/>
</dbReference>
<dbReference type="GO" id="GO:0043093">
    <property type="term" value="P:FtsZ-dependent cytokinesis"/>
    <property type="evidence" value="ECO:0007669"/>
    <property type="project" value="UniProtKB-UniRule"/>
</dbReference>
<dbReference type="FunFam" id="1.10.3900.10:FF:000001">
    <property type="entry name" value="Cell division protein ZapD"/>
    <property type="match status" value="1"/>
</dbReference>
<dbReference type="FunFam" id="2.60.440.10:FF:000001">
    <property type="entry name" value="Cell division protein ZapD"/>
    <property type="match status" value="1"/>
</dbReference>
<dbReference type="Gene3D" id="1.10.3900.10">
    <property type="entry name" value="YacF-like"/>
    <property type="match status" value="1"/>
</dbReference>
<dbReference type="Gene3D" id="2.60.440.10">
    <property type="entry name" value="YacF-like domains"/>
    <property type="match status" value="1"/>
</dbReference>
<dbReference type="HAMAP" id="MF_01092">
    <property type="entry name" value="ZapD"/>
    <property type="match status" value="1"/>
</dbReference>
<dbReference type="InterPro" id="IPR009777">
    <property type="entry name" value="ZapD"/>
</dbReference>
<dbReference type="InterPro" id="IPR027462">
    <property type="entry name" value="ZapD_C"/>
</dbReference>
<dbReference type="InterPro" id="IPR036268">
    <property type="entry name" value="ZapD_sf"/>
</dbReference>
<dbReference type="NCBIfam" id="NF003653">
    <property type="entry name" value="PRK05287.1-1"/>
    <property type="match status" value="1"/>
</dbReference>
<dbReference type="NCBIfam" id="NF003655">
    <property type="entry name" value="PRK05287.1-3"/>
    <property type="match status" value="1"/>
</dbReference>
<dbReference type="PANTHER" id="PTHR39455">
    <property type="entry name" value="CELL DIVISION PROTEIN ZAPD"/>
    <property type="match status" value="1"/>
</dbReference>
<dbReference type="PANTHER" id="PTHR39455:SF1">
    <property type="entry name" value="CELL DIVISION PROTEIN ZAPD"/>
    <property type="match status" value="1"/>
</dbReference>
<dbReference type="Pfam" id="PF07072">
    <property type="entry name" value="ZapD"/>
    <property type="match status" value="1"/>
</dbReference>
<dbReference type="SUPFAM" id="SSF160950">
    <property type="entry name" value="YacF-like"/>
    <property type="match status" value="1"/>
</dbReference>
<accession>B2U2A7</accession>
<evidence type="ECO:0000255" key="1">
    <source>
        <dbReference type="HAMAP-Rule" id="MF_01092"/>
    </source>
</evidence>
<keyword id="KW-0131">Cell cycle</keyword>
<keyword id="KW-0132">Cell division</keyword>
<keyword id="KW-0963">Cytoplasm</keyword>
<keyword id="KW-1185">Reference proteome</keyword>
<keyword id="KW-0717">Septation</keyword>
<proteinExistence type="inferred from homology"/>
<feature type="chain" id="PRO_1000136956" description="Cell division protein ZapD">
    <location>
        <begin position="1"/>
        <end position="247"/>
    </location>
</feature>
<comment type="function">
    <text evidence="1">Cell division factor that enhances FtsZ-ring assembly. Directly interacts with FtsZ and promotes bundling of FtsZ protofilaments, with a reduction in FtsZ GTPase activity.</text>
</comment>
<comment type="subunit">
    <text evidence="1">Interacts with FtsZ.</text>
</comment>
<comment type="subcellular location">
    <subcellularLocation>
        <location evidence="1">Cytoplasm</location>
    </subcellularLocation>
    <text evidence="1">Localizes to mid-cell in an FtsZ-dependent manner.</text>
</comment>
<comment type="similarity">
    <text evidence="1">Belongs to the ZapD family.</text>
</comment>
<organism>
    <name type="scientific">Shigella boydii serotype 18 (strain CDC 3083-94 / BS512)</name>
    <dbReference type="NCBI Taxonomy" id="344609"/>
    <lineage>
        <taxon>Bacteria</taxon>
        <taxon>Pseudomonadati</taxon>
        <taxon>Pseudomonadota</taxon>
        <taxon>Gammaproteobacteria</taxon>
        <taxon>Enterobacterales</taxon>
        <taxon>Enterobacteriaceae</taxon>
        <taxon>Shigella</taxon>
    </lineage>
</organism>
<gene>
    <name evidence="1" type="primary">zapD</name>
    <name type="ordered locus">SbBS512_E0095</name>
</gene>